<evidence type="ECO:0000255" key="1"/>
<evidence type="ECO:0000269" key="2">
    <source>
    </source>
</evidence>
<evidence type="ECO:0000303" key="3">
    <source>
    </source>
</evidence>
<evidence type="ECO:0000305" key="4"/>
<protein>
    <recommendedName>
        <fullName>FMRFamide-15</fullName>
    </recommendedName>
    <alternativeName>
        <fullName evidence="3">SabFMRFamide-15</fullName>
    </alternativeName>
</protein>
<organism>
    <name type="scientific">Sarcophaga bullata</name>
    <name type="common">Grey flesh fly</name>
    <name type="synonym">Neobellieria bullata</name>
    <dbReference type="NCBI Taxonomy" id="7385"/>
    <lineage>
        <taxon>Eukaryota</taxon>
        <taxon>Metazoa</taxon>
        <taxon>Ecdysozoa</taxon>
        <taxon>Arthropoda</taxon>
        <taxon>Hexapoda</taxon>
        <taxon>Insecta</taxon>
        <taxon>Pterygota</taxon>
        <taxon>Neoptera</taxon>
        <taxon>Endopterygota</taxon>
        <taxon>Diptera</taxon>
        <taxon>Brachycera</taxon>
        <taxon>Muscomorpha</taxon>
        <taxon>Oestroidea</taxon>
        <taxon>Sarcophagidae</taxon>
        <taxon>Sarcophaga</taxon>
        <taxon>Neobellieria</taxon>
    </lineage>
</organism>
<comment type="subcellular location">
    <subcellularLocation>
        <location evidence="4">Secreted</location>
    </subcellularLocation>
</comment>
<comment type="mass spectrometry"/>
<comment type="similarity">
    <text evidence="1">Belongs to the FARP (FMRFamide related peptide) family.</text>
</comment>
<feature type="peptide" id="PRO_0000371774" description="FMRFamide-15">
    <location>
        <begin position="1"/>
        <end position="7"/>
    </location>
</feature>
<feature type="modified residue" description="Phenylalanine amide" evidence="2">
    <location>
        <position position="7"/>
    </location>
</feature>
<keyword id="KW-0027">Amidation</keyword>
<keyword id="KW-0903">Direct protein sequencing</keyword>
<keyword id="KW-0527">Neuropeptide</keyword>
<keyword id="KW-0964">Secreted</keyword>
<sequence>THDFMRF</sequence>
<reference evidence="4" key="1">
    <citation type="journal article" date="2009" name="Gen. Comp. Endocrinol.">
        <title>Extended FMRFamides in dipteran insects: conservative expression in the neuroendocrine system is accompanied by rapid sequence evolution.</title>
        <authorList>
            <person name="Rahman M.M."/>
            <person name="Fromm B."/>
            <person name="Neupert S."/>
            <person name="Kreusch S."/>
            <person name="Predel R."/>
        </authorList>
    </citation>
    <scope>PROTEIN SEQUENCE</scope>
    <scope>MASS SPECTROMETRY</scope>
    <scope>AMIDATION AT PHE-7</scope>
    <source>
        <tissue evidence="2">Thoracic ganglionic sheath</tissue>
    </source>
</reference>
<accession>P85481</accession>
<proteinExistence type="evidence at protein level"/>
<name>FAR15_SARBU</name>
<dbReference type="GO" id="GO:0005576">
    <property type="term" value="C:extracellular region"/>
    <property type="evidence" value="ECO:0007669"/>
    <property type="project" value="UniProtKB-SubCell"/>
</dbReference>
<dbReference type="GO" id="GO:0007218">
    <property type="term" value="P:neuropeptide signaling pathway"/>
    <property type="evidence" value="ECO:0007669"/>
    <property type="project" value="UniProtKB-KW"/>
</dbReference>